<evidence type="ECO:0000255" key="1">
    <source>
        <dbReference type="HAMAP-Rule" id="MF_00115"/>
    </source>
</evidence>
<accession>A7MPE5</accession>
<sequence>MSFFKEFREFAMRGNVVDLAVGVIIGAAFGKIVSSLVADIIMPPLGLLIGGIDFKQFALTLRPAVGDTPAVIMHYGVFIQNVFDFVIVAFAIFLAIKVINKLHQKKPKEAPGPSKEEVLLTEIRDLLKQQNEHRP</sequence>
<gene>
    <name evidence="1" type="primary">mscL</name>
    <name type="ordered locus">ESA_00035</name>
</gene>
<reference key="1">
    <citation type="journal article" date="2010" name="PLoS ONE">
        <title>Genome sequence of Cronobacter sakazakii BAA-894 and comparative genomic hybridization analysis with other Cronobacter species.</title>
        <authorList>
            <person name="Kucerova E."/>
            <person name="Clifton S.W."/>
            <person name="Xia X.Q."/>
            <person name="Long F."/>
            <person name="Porwollik S."/>
            <person name="Fulton L."/>
            <person name="Fronick C."/>
            <person name="Minx P."/>
            <person name="Kyung K."/>
            <person name="Warren W."/>
            <person name="Fulton R."/>
            <person name="Feng D."/>
            <person name="Wollam A."/>
            <person name="Shah N."/>
            <person name="Bhonagiri V."/>
            <person name="Nash W.E."/>
            <person name="Hallsworth-Pepin K."/>
            <person name="Wilson R.K."/>
            <person name="McClelland M."/>
            <person name="Forsythe S.J."/>
        </authorList>
    </citation>
    <scope>NUCLEOTIDE SEQUENCE [LARGE SCALE GENOMIC DNA]</scope>
    <source>
        <strain>ATCC BAA-894</strain>
    </source>
</reference>
<name>MSCL_CROS8</name>
<keyword id="KW-0997">Cell inner membrane</keyword>
<keyword id="KW-1003">Cell membrane</keyword>
<keyword id="KW-0407">Ion channel</keyword>
<keyword id="KW-0406">Ion transport</keyword>
<keyword id="KW-0472">Membrane</keyword>
<keyword id="KW-1185">Reference proteome</keyword>
<keyword id="KW-0812">Transmembrane</keyword>
<keyword id="KW-1133">Transmembrane helix</keyword>
<keyword id="KW-0813">Transport</keyword>
<feature type="chain" id="PRO_1000015379" description="Large-conductance mechanosensitive channel">
    <location>
        <begin position="1"/>
        <end position="135"/>
    </location>
</feature>
<feature type="transmembrane region" description="Helical" evidence="1">
    <location>
        <begin position="10"/>
        <end position="30"/>
    </location>
</feature>
<feature type="transmembrane region" description="Helical" evidence="1">
    <location>
        <begin position="76"/>
        <end position="96"/>
    </location>
</feature>
<proteinExistence type="inferred from homology"/>
<organism>
    <name type="scientific">Cronobacter sakazakii (strain ATCC BAA-894)</name>
    <name type="common">Enterobacter sakazakii</name>
    <dbReference type="NCBI Taxonomy" id="290339"/>
    <lineage>
        <taxon>Bacteria</taxon>
        <taxon>Pseudomonadati</taxon>
        <taxon>Pseudomonadota</taxon>
        <taxon>Gammaproteobacteria</taxon>
        <taxon>Enterobacterales</taxon>
        <taxon>Enterobacteriaceae</taxon>
        <taxon>Cronobacter</taxon>
    </lineage>
</organism>
<protein>
    <recommendedName>
        <fullName evidence="1">Large-conductance mechanosensitive channel</fullName>
    </recommendedName>
</protein>
<dbReference type="EMBL" id="CP000783">
    <property type="protein sequence ID" value="ABU75344.1"/>
    <property type="molecule type" value="Genomic_DNA"/>
</dbReference>
<dbReference type="RefSeq" id="WP_007778669.1">
    <property type="nucleotide sequence ID" value="NC_009778.1"/>
</dbReference>
<dbReference type="SMR" id="A7MPE5"/>
<dbReference type="GeneID" id="56733031"/>
<dbReference type="KEGG" id="esa:ESA_00035"/>
<dbReference type="HOGENOM" id="CLU_095787_0_0_6"/>
<dbReference type="Proteomes" id="UP000000260">
    <property type="component" value="Chromosome"/>
</dbReference>
<dbReference type="GO" id="GO:0005886">
    <property type="term" value="C:plasma membrane"/>
    <property type="evidence" value="ECO:0007669"/>
    <property type="project" value="UniProtKB-SubCell"/>
</dbReference>
<dbReference type="GO" id="GO:0008381">
    <property type="term" value="F:mechanosensitive monoatomic ion channel activity"/>
    <property type="evidence" value="ECO:0007669"/>
    <property type="project" value="UniProtKB-UniRule"/>
</dbReference>
<dbReference type="FunFam" id="1.10.1200.120:FF:000001">
    <property type="entry name" value="Large-conductance mechanosensitive channel"/>
    <property type="match status" value="1"/>
</dbReference>
<dbReference type="Gene3D" id="1.10.1200.120">
    <property type="entry name" value="Large-conductance mechanosensitive channel, MscL, domain 1"/>
    <property type="match status" value="1"/>
</dbReference>
<dbReference type="HAMAP" id="MF_00115">
    <property type="entry name" value="MscL"/>
    <property type="match status" value="1"/>
</dbReference>
<dbReference type="InterPro" id="IPR019823">
    <property type="entry name" value="Mechanosensitive_channel_CS"/>
</dbReference>
<dbReference type="InterPro" id="IPR001185">
    <property type="entry name" value="MS_channel"/>
</dbReference>
<dbReference type="InterPro" id="IPR037673">
    <property type="entry name" value="MSC/AndL"/>
</dbReference>
<dbReference type="InterPro" id="IPR036019">
    <property type="entry name" value="MscL_channel"/>
</dbReference>
<dbReference type="NCBIfam" id="TIGR00220">
    <property type="entry name" value="mscL"/>
    <property type="match status" value="1"/>
</dbReference>
<dbReference type="NCBIfam" id="NF001841">
    <property type="entry name" value="PRK00567.1-1"/>
    <property type="match status" value="1"/>
</dbReference>
<dbReference type="NCBIfam" id="NF001843">
    <property type="entry name" value="PRK00567.1-4"/>
    <property type="match status" value="1"/>
</dbReference>
<dbReference type="PANTHER" id="PTHR30266:SF2">
    <property type="entry name" value="LARGE-CONDUCTANCE MECHANOSENSITIVE CHANNEL"/>
    <property type="match status" value="1"/>
</dbReference>
<dbReference type="PANTHER" id="PTHR30266">
    <property type="entry name" value="MECHANOSENSITIVE CHANNEL MSCL"/>
    <property type="match status" value="1"/>
</dbReference>
<dbReference type="Pfam" id="PF01741">
    <property type="entry name" value="MscL"/>
    <property type="match status" value="1"/>
</dbReference>
<dbReference type="PRINTS" id="PR01264">
    <property type="entry name" value="MECHCHANNEL"/>
</dbReference>
<dbReference type="SUPFAM" id="SSF81330">
    <property type="entry name" value="Gated mechanosensitive channel"/>
    <property type="match status" value="1"/>
</dbReference>
<dbReference type="PROSITE" id="PS01327">
    <property type="entry name" value="MSCL"/>
    <property type="match status" value="1"/>
</dbReference>
<comment type="function">
    <text evidence="1">Channel that opens in response to stretch forces in the membrane lipid bilayer. May participate in the regulation of osmotic pressure changes within the cell.</text>
</comment>
<comment type="subunit">
    <text evidence="1">Homopentamer.</text>
</comment>
<comment type="subcellular location">
    <subcellularLocation>
        <location evidence="1">Cell inner membrane</location>
        <topology evidence="1">Multi-pass membrane protein</topology>
    </subcellularLocation>
</comment>
<comment type="similarity">
    <text evidence="1">Belongs to the MscL family.</text>
</comment>